<dbReference type="EMBL" id="AF464907">
    <property type="protein sequence ID" value="AAL73490.1"/>
    <property type="molecule type" value="mRNA"/>
</dbReference>
<dbReference type="EMBL" id="AC133859">
    <property type="protein sequence ID" value="AAP50993.1"/>
    <property type="molecule type" value="Genomic_DNA"/>
</dbReference>
<dbReference type="EMBL" id="DP000009">
    <property type="protein sequence ID" value="ABF97976.1"/>
    <property type="molecule type" value="Genomic_DNA"/>
</dbReference>
<dbReference type="EMBL" id="AP008209">
    <property type="protein sequence ID" value="BAF12726.1"/>
    <property type="molecule type" value="Genomic_DNA"/>
</dbReference>
<dbReference type="EMBL" id="AP014959">
    <property type="protein sequence ID" value="BAS85567.1"/>
    <property type="molecule type" value="Genomic_DNA"/>
</dbReference>
<dbReference type="EMBL" id="AK061103">
    <property type="protein sequence ID" value="BAG87728.1"/>
    <property type="molecule type" value="mRNA"/>
</dbReference>
<dbReference type="RefSeq" id="XP_015631681.1">
    <property type="nucleotide sequence ID" value="XM_015776195.1"/>
</dbReference>
<dbReference type="SMR" id="Q8W0W4"/>
<dbReference type="FunCoup" id="Q8W0W4">
    <property type="interactions" value="1692"/>
</dbReference>
<dbReference type="STRING" id="39947.Q8W0W4"/>
<dbReference type="PaxDb" id="39947-Q8W0W4"/>
<dbReference type="EnsemblPlants" id="Os03t0657000-01">
    <property type="protein sequence ID" value="Os03t0657000-01"/>
    <property type="gene ID" value="Os03g0657000"/>
</dbReference>
<dbReference type="Gramene" id="Os03t0657000-01">
    <property type="protein sequence ID" value="Os03t0657000-01"/>
    <property type="gene ID" value="Os03g0657000"/>
</dbReference>
<dbReference type="KEGG" id="dosa:Os03g0657000"/>
<dbReference type="eggNOG" id="KOG3302">
    <property type="taxonomic scope" value="Eukaryota"/>
</dbReference>
<dbReference type="HOGENOM" id="CLU_060161_4_2_1"/>
<dbReference type="InParanoid" id="Q8W0W4"/>
<dbReference type="OMA" id="NCEYEPE"/>
<dbReference type="OrthoDB" id="728012at2759"/>
<dbReference type="Proteomes" id="UP000000763">
    <property type="component" value="Chromosome 3"/>
</dbReference>
<dbReference type="Proteomes" id="UP000059680">
    <property type="component" value="Chromosome 3"/>
</dbReference>
<dbReference type="GO" id="GO:0005634">
    <property type="term" value="C:nucleus"/>
    <property type="evidence" value="ECO:0007669"/>
    <property type="project" value="UniProtKB-SubCell"/>
</dbReference>
<dbReference type="GO" id="GO:0003677">
    <property type="term" value="F:DNA binding"/>
    <property type="evidence" value="ECO:0007669"/>
    <property type="project" value="UniProtKB-KW"/>
</dbReference>
<dbReference type="GO" id="GO:0016251">
    <property type="term" value="F:RNA polymerase II general transcription initiation factor activity"/>
    <property type="evidence" value="ECO:0000318"/>
    <property type="project" value="GO_Central"/>
</dbReference>
<dbReference type="GO" id="GO:0006352">
    <property type="term" value="P:DNA-templated transcription initiation"/>
    <property type="evidence" value="ECO:0000318"/>
    <property type="project" value="GO_Central"/>
</dbReference>
<dbReference type="CDD" id="cd04516">
    <property type="entry name" value="TBP_eukaryotes"/>
    <property type="match status" value="1"/>
</dbReference>
<dbReference type="FunFam" id="3.30.310.10:FF:000001">
    <property type="entry name" value="TATA-box-binding protein 2"/>
    <property type="match status" value="1"/>
</dbReference>
<dbReference type="FunFam" id="3.30.310.10:FF:000002">
    <property type="entry name" value="TATA-box-binding protein 2"/>
    <property type="match status" value="1"/>
</dbReference>
<dbReference type="Gene3D" id="3.30.310.10">
    <property type="entry name" value="TATA-Binding Protein"/>
    <property type="match status" value="2"/>
</dbReference>
<dbReference type="HAMAP" id="MF_00408">
    <property type="entry name" value="TATA_bind_prot_arch"/>
    <property type="match status" value="1"/>
</dbReference>
<dbReference type="InterPro" id="IPR000814">
    <property type="entry name" value="TBP"/>
</dbReference>
<dbReference type="InterPro" id="IPR030491">
    <property type="entry name" value="TBP_CS"/>
</dbReference>
<dbReference type="InterPro" id="IPR012295">
    <property type="entry name" value="TBP_dom_sf"/>
</dbReference>
<dbReference type="InterPro" id="IPR033710">
    <property type="entry name" value="TBP_eukaryotic"/>
</dbReference>
<dbReference type="PANTHER" id="PTHR10126">
    <property type="entry name" value="TATA-BOX BINDING PROTEIN"/>
    <property type="match status" value="1"/>
</dbReference>
<dbReference type="Pfam" id="PF00352">
    <property type="entry name" value="TBP"/>
    <property type="match status" value="2"/>
</dbReference>
<dbReference type="PRINTS" id="PR00686">
    <property type="entry name" value="TIFACTORIID"/>
</dbReference>
<dbReference type="SUPFAM" id="SSF55945">
    <property type="entry name" value="TATA-box binding protein-like"/>
    <property type="match status" value="2"/>
</dbReference>
<dbReference type="PROSITE" id="PS00351">
    <property type="entry name" value="TFIID"/>
    <property type="match status" value="2"/>
</dbReference>
<proteinExistence type="evidence at protein level"/>
<organism>
    <name type="scientific">Oryza sativa subsp. japonica</name>
    <name type="common">Rice</name>
    <dbReference type="NCBI Taxonomy" id="39947"/>
    <lineage>
        <taxon>Eukaryota</taxon>
        <taxon>Viridiplantae</taxon>
        <taxon>Streptophyta</taxon>
        <taxon>Embryophyta</taxon>
        <taxon>Tracheophyta</taxon>
        <taxon>Spermatophyta</taxon>
        <taxon>Magnoliopsida</taxon>
        <taxon>Liliopsida</taxon>
        <taxon>Poales</taxon>
        <taxon>Poaceae</taxon>
        <taxon>BOP clade</taxon>
        <taxon>Oryzoideae</taxon>
        <taxon>Oryzeae</taxon>
        <taxon>Oryzinae</taxon>
        <taxon>Oryza</taxon>
        <taxon>Oryza sativa</taxon>
    </lineage>
</organism>
<accession>Q8W0W4</accession>
<accession>Q10FT1</accession>
<accession>Q7Y094</accession>
<feature type="chain" id="PRO_0000153981" description="TATA-binding protein 2">
    <location>
        <begin position="1"/>
        <end position="203"/>
    </location>
</feature>
<feature type="repeat" description="1" evidence="2">
    <location>
        <begin position="28"/>
        <end position="104"/>
    </location>
</feature>
<feature type="repeat" description="2" evidence="2">
    <location>
        <begin position="118"/>
        <end position="195"/>
    </location>
</feature>
<protein>
    <recommendedName>
        <fullName>TATA-binding protein 2</fullName>
    </recommendedName>
    <alternativeName>
        <fullName>TATA sequence-binding protein 2</fullName>
        <shortName>TBP-2</shortName>
    </alternativeName>
    <alternativeName>
        <fullName>TATA-binding factor 2</fullName>
    </alternativeName>
    <alternativeName>
        <fullName>TATA-box factor 2</fullName>
    </alternativeName>
    <alternativeName>
        <fullName>Transcription initiation factor TFIID TBP-2 subunit</fullName>
    </alternativeName>
</protein>
<keyword id="KW-0010">Activator</keyword>
<keyword id="KW-0238">DNA-binding</keyword>
<keyword id="KW-0539">Nucleus</keyword>
<keyword id="KW-1185">Reference proteome</keyword>
<keyword id="KW-0677">Repeat</keyword>
<keyword id="KW-0804">Transcription</keyword>
<keyword id="KW-0805">Transcription regulation</keyword>
<reference key="1">
    <citation type="journal article" date="2002" name="Plant Cell">
        <title>Rice TATA binding protein interacts functionally with transcription factor IIB and the RF2a bZIP transcriptional activator in an enhanced plant in vitro transcription system.</title>
        <authorList>
            <person name="Zhu Q."/>
            <person name="Ordiz M.I."/>
            <person name="Dabi T."/>
            <person name="Beachy R.N."/>
            <person name="Lamb C."/>
        </authorList>
    </citation>
    <scope>NUCLEOTIDE SEQUENCE [MRNA]</scope>
    <scope>FUNCTION</scope>
    <scope>INTERACTION WITH RF2A AND TFIIB</scope>
</reference>
<reference key="2">
    <citation type="journal article" date="2005" name="Genome Res.">
        <title>Sequence, annotation, and analysis of synteny between rice chromosome 3 and diverged grass species.</title>
        <authorList>
            <consortium name="The rice chromosome 3 sequencing consortium"/>
            <person name="Buell C.R."/>
            <person name="Yuan Q."/>
            <person name="Ouyang S."/>
            <person name="Liu J."/>
            <person name="Zhu W."/>
            <person name="Wang A."/>
            <person name="Maiti R."/>
            <person name="Haas B."/>
            <person name="Wortman J."/>
            <person name="Pertea M."/>
            <person name="Jones K.M."/>
            <person name="Kim M."/>
            <person name="Overton L."/>
            <person name="Tsitrin T."/>
            <person name="Fadrosh D."/>
            <person name="Bera J."/>
            <person name="Weaver B."/>
            <person name="Jin S."/>
            <person name="Johri S."/>
            <person name="Reardon M."/>
            <person name="Webb K."/>
            <person name="Hill J."/>
            <person name="Moffat K."/>
            <person name="Tallon L."/>
            <person name="Van Aken S."/>
            <person name="Lewis M."/>
            <person name="Utterback T."/>
            <person name="Feldblyum T."/>
            <person name="Zismann V."/>
            <person name="Iobst S."/>
            <person name="Hsiao J."/>
            <person name="de Vazeille A.R."/>
            <person name="Salzberg S.L."/>
            <person name="White O."/>
            <person name="Fraser C.M."/>
            <person name="Yu Y."/>
            <person name="Kim H."/>
            <person name="Rambo T."/>
            <person name="Currie J."/>
            <person name="Collura K."/>
            <person name="Kernodle-Thompson S."/>
            <person name="Wei F."/>
            <person name="Kudrna K."/>
            <person name="Ammiraju J.S.S."/>
            <person name="Luo M."/>
            <person name="Goicoechea J.L."/>
            <person name="Wing R.A."/>
            <person name="Henry D."/>
            <person name="Oates R."/>
            <person name="Palmer M."/>
            <person name="Pries G."/>
            <person name="Saski C."/>
            <person name="Simmons J."/>
            <person name="Soderlund C."/>
            <person name="Nelson W."/>
            <person name="de la Bastide M."/>
            <person name="Spiegel L."/>
            <person name="Nascimento L."/>
            <person name="Huang E."/>
            <person name="Preston R."/>
            <person name="Zutavern T."/>
            <person name="Palmer L."/>
            <person name="O'Shaughnessy A."/>
            <person name="Dike S."/>
            <person name="McCombie W.R."/>
            <person name="Minx P."/>
            <person name="Cordum H."/>
            <person name="Wilson R."/>
            <person name="Jin W."/>
            <person name="Lee H.R."/>
            <person name="Jiang J."/>
            <person name="Jackson S."/>
        </authorList>
    </citation>
    <scope>NUCLEOTIDE SEQUENCE [LARGE SCALE GENOMIC DNA]</scope>
    <source>
        <strain>cv. Nipponbare</strain>
    </source>
</reference>
<reference key="3">
    <citation type="journal article" date="2005" name="Nature">
        <title>The map-based sequence of the rice genome.</title>
        <authorList>
            <consortium name="International rice genome sequencing project (IRGSP)"/>
        </authorList>
    </citation>
    <scope>NUCLEOTIDE SEQUENCE [LARGE SCALE GENOMIC DNA]</scope>
    <source>
        <strain>cv. Nipponbare</strain>
    </source>
</reference>
<reference key="4">
    <citation type="journal article" date="2008" name="Nucleic Acids Res.">
        <title>The rice annotation project database (RAP-DB): 2008 update.</title>
        <authorList>
            <consortium name="The rice annotation project (RAP)"/>
        </authorList>
    </citation>
    <scope>GENOME REANNOTATION</scope>
    <source>
        <strain>cv. Nipponbare</strain>
    </source>
</reference>
<reference key="5">
    <citation type="journal article" date="2013" name="Rice">
        <title>Improvement of the Oryza sativa Nipponbare reference genome using next generation sequence and optical map data.</title>
        <authorList>
            <person name="Kawahara Y."/>
            <person name="de la Bastide M."/>
            <person name="Hamilton J.P."/>
            <person name="Kanamori H."/>
            <person name="McCombie W.R."/>
            <person name="Ouyang S."/>
            <person name="Schwartz D.C."/>
            <person name="Tanaka T."/>
            <person name="Wu J."/>
            <person name="Zhou S."/>
            <person name="Childs K.L."/>
            <person name="Davidson R.M."/>
            <person name="Lin H."/>
            <person name="Quesada-Ocampo L."/>
            <person name="Vaillancourt B."/>
            <person name="Sakai H."/>
            <person name="Lee S.S."/>
            <person name="Kim J."/>
            <person name="Numa H."/>
            <person name="Itoh T."/>
            <person name="Buell C.R."/>
            <person name="Matsumoto T."/>
        </authorList>
    </citation>
    <scope>GENOME REANNOTATION</scope>
    <source>
        <strain>cv. Nipponbare</strain>
    </source>
</reference>
<reference key="6">
    <citation type="journal article" date="2003" name="Science">
        <title>Collection, mapping, and annotation of over 28,000 cDNA clones from japonica rice.</title>
        <authorList>
            <consortium name="The rice full-length cDNA consortium"/>
        </authorList>
    </citation>
    <scope>NUCLEOTIDE SEQUENCE [LARGE SCALE MRNA]</scope>
    <source>
        <strain>cv. Nipponbare</strain>
    </source>
</reference>
<reference key="7">
    <citation type="journal article" date="2017" name="Plant Sci.">
        <title>Functional characterization of rice CW-domain containing zinc finger proteins involved in histone recognition.</title>
        <authorList>
            <person name="Zhang Z."/>
            <person name="Zhang F."/>
            <person name="Cheng Z.J."/>
            <person name="Liu L.L."/>
            <person name="Lin Q.B."/>
            <person name="Wu F.Q."/>
            <person name="Zhang H."/>
            <person name="Wang J.L."/>
            <person name="Wang J."/>
            <person name="Guo X.P."/>
            <person name="Zhang X."/>
            <person name="Lei C.L."/>
            <person name="Zhao Z.C."/>
            <person name="Zhu S.S."/>
            <person name="Wan J.M."/>
        </authorList>
    </citation>
    <scope>INTERACTION WITH CWZF7</scope>
</reference>
<name>TBP2_ORYSJ</name>
<evidence type="ECO:0000250" key="1"/>
<evidence type="ECO:0000255" key="2">
    <source>
        <dbReference type="HAMAP-Rule" id="MF_00408"/>
    </source>
</evidence>
<evidence type="ECO:0000269" key="3">
    <source>
    </source>
</evidence>
<evidence type="ECO:0000269" key="4">
    <source>
    </source>
</evidence>
<evidence type="ECO:0000305" key="5"/>
<evidence type="ECO:0000305" key="6">
    <source>
    </source>
</evidence>
<sequence>MAAEAAAALEGSEPVDLAKHPSGIIPTLQNIVSTVNLDCKLDLKAIALQARNAEYNPKRFAAVIMRIREPKTTALIFASGKMVCTGAKSEQQSKLAARKYARIIQKLGFPAKFKDFKIQNIVGSCDVKFPIRLEGLAYSHGAFSSYEPELFPGLIYRMKQPKIVLLIFVSGKIVLTGAKVRDETYTAFENIYPVLTEFRKVQQ</sequence>
<comment type="function">
    <text evidence="1 3 6">General transcription factor that functions at the core of the DNA-binding multiprotein factor TFIID (Probable). Binding of TFIID to the TATA box is the initial transcriptional step of the pre-initiation complex (PIC), playing a role in the activation of eukaryotic genes transcribed by RNA polymerase II (By similarity).</text>
</comment>
<comment type="subunit">
    <text evidence="1 3 4">Belongs to the TFIID complex together with the TBP-associated factors (TAFs). Binds DNA as monomer (By similarity). Interacts with RF2A and TFIIB (PubMed:11971135). Interacts with CWZF7 (PubMed:28818372).</text>
</comment>
<comment type="subcellular location">
    <subcellularLocation>
        <location evidence="5">Nucleus</location>
    </subcellularLocation>
</comment>
<comment type="similarity">
    <text evidence="5">Belongs to the TBP family.</text>
</comment>
<gene>
    <name type="primary">TBP2</name>
    <name type="synonym">TFIID</name>
    <name type="ordered locus">Os03g0657000</name>
    <name type="ordered locus">LOC_Os03g45410</name>
    <name type="ORF">OSJNBa0075A22.20</name>
</gene>